<keyword id="KW-0903">Direct protein sequencing</keyword>
<keyword id="KW-1015">Disulfide bond</keyword>
<keyword id="KW-0325">Glycoprotein</keyword>
<keyword id="KW-0391">Immunity</keyword>
<keyword id="KW-0472">Membrane</keyword>
<keyword id="KW-0490">MHC I</keyword>
<keyword id="KW-1185">Reference proteome</keyword>
<keyword id="KW-0732">Signal</keyword>
<keyword id="KW-0812">Transmembrane</keyword>
<keyword id="KW-1133">Transmembrane helix</keyword>
<gene>
    <name type="primary">RT1-Aw2</name>
</gene>
<feature type="signal peptide" evidence="2">
    <location>
        <begin position="1"/>
        <end position="24"/>
    </location>
</feature>
<feature type="chain" id="PRO_0000018943" description="Class I histocompatibility antigen, Non-RT1.A alpha-1 chain">
    <location>
        <begin position="25"/>
        <end position="319"/>
    </location>
</feature>
<feature type="topological domain" description="Extracellular" evidence="2">
    <location>
        <begin position="25"/>
        <end position="307"/>
    </location>
</feature>
<feature type="transmembrane region" description="Helical" evidence="2">
    <location>
        <begin position="308"/>
        <end position="319"/>
    </location>
</feature>
<feature type="domain" description="Ig-like C1-type">
    <location>
        <begin position="209"/>
        <end position="295"/>
    </location>
</feature>
<feature type="region of interest" description="Alpha-1">
    <location>
        <begin position="25"/>
        <end position="114"/>
    </location>
</feature>
<feature type="region of interest" description="Alpha-2">
    <location>
        <begin position="115"/>
        <end position="206"/>
    </location>
</feature>
<feature type="region of interest" description="Alpha-3">
    <location>
        <begin position="207"/>
        <end position="298"/>
    </location>
</feature>
<feature type="region of interest" description="Connecting peptide">
    <location>
        <begin position="299"/>
        <end position="307"/>
    </location>
</feature>
<feature type="glycosylation site" description="N-linked (GlcNAc...) asparagine" evidence="1">
    <location>
        <position position="110"/>
    </location>
</feature>
<feature type="glycosylation site" description="N-linked (GlcNAc...) asparagine" evidence="2">
    <location>
        <position position="280"/>
    </location>
</feature>
<feature type="disulfide bond" evidence="3">
    <location>
        <begin position="125"/>
        <end position="188"/>
    </location>
</feature>
<feature type="disulfide bond" evidence="3">
    <location>
        <begin position="227"/>
        <end position="283"/>
    </location>
</feature>
<name>HA11_RAT</name>
<proteinExistence type="evidence at protein level"/>
<dbReference type="EMBL" id="M31038">
    <property type="protein sequence ID" value="AAA41608.1"/>
    <property type="molecule type" value="mRNA"/>
</dbReference>
<dbReference type="PIR" id="B35090">
    <property type="entry name" value="B35090"/>
</dbReference>
<dbReference type="RefSeq" id="NP_036777.1">
    <property type="nucleotide sequence ID" value="NM_012645.1"/>
</dbReference>
<dbReference type="SMR" id="P15978"/>
<dbReference type="FunCoup" id="P15978">
    <property type="interactions" value="85"/>
</dbReference>
<dbReference type="GlyCosmos" id="P15978">
    <property type="glycosylation" value="2 sites, No reported glycans"/>
</dbReference>
<dbReference type="GlyGen" id="P15978">
    <property type="glycosylation" value="2 sites"/>
</dbReference>
<dbReference type="jPOST" id="P15978"/>
<dbReference type="GeneID" id="24737"/>
<dbReference type="CTD" id="24737"/>
<dbReference type="RGD" id="3512">
    <property type="gene designation" value="RT1-Aw2"/>
</dbReference>
<dbReference type="InParanoid" id="P15978"/>
<dbReference type="PhylomeDB" id="P15978"/>
<dbReference type="PRO" id="PR:P15978"/>
<dbReference type="Proteomes" id="UP000002494">
    <property type="component" value="Unplaced"/>
</dbReference>
<dbReference type="GO" id="GO:0009897">
    <property type="term" value="C:external side of plasma membrane"/>
    <property type="evidence" value="ECO:0000318"/>
    <property type="project" value="GO_Central"/>
</dbReference>
<dbReference type="GO" id="GO:0005615">
    <property type="term" value="C:extracellular space"/>
    <property type="evidence" value="ECO:0000318"/>
    <property type="project" value="GO_Central"/>
</dbReference>
<dbReference type="GO" id="GO:0098553">
    <property type="term" value="C:lumenal side of endoplasmic reticulum membrane"/>
    <property type="evidence" value="ECO:0007669"/>
    <property type="project" value="UniProtKB-ARBA"/>
</dbReference>
<dbReference type="GO" id="GO:0042612">
    <property type="term" value="C:MHC class I protein complex"/>
    <property type="evidence" value="ECO:0007669"/>
    <property type="project" value="UniProtKB-KW"/>
</dbReference>
<dbReference type="GO" id="GO:0030670">
    <property type="term" value="C:phagocytic vesicle membrane"/>
    <property type="evidence" value="ECO:0007669"/>
    <property type="project" value="UniProtKB-ARBA"/>
</dbReference>
<dbReference type="GO" id="GO:0042605">
    <property type="term" value="F:peptide antigen binding"/>
    <property type="evidence" value="ECO:0000318"/>
    <property type="project" value="GO_Central"/>
</dbReference>
<dbReference type="GO" id="GO:0005102">
    <property type="term" value="F:signaling receptor binding"/>
    <property type="evidence" value="ECO:0000318"/>
    <property type="project" value="GO_Central"/>
</dbReference>
<dbReference type="GO" id="GO:0002486">
    <property type="term" value="P:antigen processing and presentation of endogenous peptide antigen via MHC class I via ER pathway, TAP-independent"/>
    <property type="evidence" value="ECO:0000318"/>
    <property type="project" value="GO_Central"/>
</dbReference>
<dbReference type="GO" id="GO:0002476">
    <property type="term" value="P:antigen processing and presentation of endogenous peptide antigen via MHC class Ib"/>
    <property type="evidence" value="ECO:0000318"/>
    <property type="project" value="GO_Central"/>
</dbReference>
<dbReference type="GO" id="GO:0006955">
    <property type="term" value="P:immune response"/>
    <property type="evidence" value="ECO:0000318"/>
    <property type="project" value="GO_Central"/>
</dbReference>
<dbReference type="GO" id="GO:0001916">
    <property type="term" value="P:positive regulation of T cell mediated cytotoxicity"/>
    <property type="evidence" value="ECO:0000318"/>
    <property type="project" value="GO_Central"/>
</dbReference>
<dbReference type="CDD" id="cd21015">
    <property type="entry name" value="IgC1_MHC_Ia_RT1-Aa"/>
    <property type="match status" value="1"/>
</dbReference>
<dbReference type="FunFam" id="2.60.40.10:FF:000014">
    <property type="entry name" value="H-2 class I histocompatibility antigen, alpha chain"/>
    <property type="match status" value="1"/>
</dbReference>
<dbReference type="FunFam" id="3.30.500.10:FF:000001">
    <property type="entry name" value="H-2 class I histocompatibility antigen, alpha chain"/>
    <property type="match status" value="1"/>
</dbReference>
<dbReference type="Gene3D" id="2.60.40.10">
    <property type="entry name" value="Immunoglobulins"/>
    <property type="match status" value="1"/>
</dbReference>
<dbReference type="Gene3D" id="3.30.500.10">
    <property type="entry name" value="MHC class I-like antigen recognition-like"/>
    <property type="match status" value="1"/>
</dbReference>
<dbReference type="InterPro" id="IPR007110">
    <property type="entry name" value="Ig-like_dom"/>
</dbReference>
<dbReference type="InterPro" id="IPR036179">
    <property type="entry name" value="Ig-like_dom_sf"/>
</dbReference>
<dbReference type="InterPro" id="IPR013783">
    <property type="entry name" value="Ig-like_fold"/>
</dbReference>
<dbReference type="InterPro" id="IPR003006">
    <property type="entry name" value="Ig/MHC_CS"/>
</dbReference>
<dbReference type="InterPro" id="IPR003597">
    <property type="entry name" value="Ig_C1-set"/>
</dbReference>
<dbReference type="InterPro" id="IPR050208">
    <property type="entry name" value="MHC_class-I_related"/>
</dbReference>
<dbReference type="InterPro" id="IPR011161">
    <property type="entry name" value="MHC_I-like_Ag-recog"/>
</dbReference>
<dbReference type="InterPro" id="IPR037055">
    <property type="entry name" value="MHC_I-like_Ag-recog_sf"/>
</dbReference>
<dbReference type="InterPro" id="IPR011162">
    <property type="entry name" value="MHC_I/II-like_Ag-recog"/>
</dbReference>
<dbReference type="InterPro" id="IPR001039">
    <property type="entry name" value="MHC_I_a_a1/a2"/>
</dbReference>
<dbReference type="PANTHER" id="PTHR16675:SF251">
    <property type="entry name" value="HLA CLASS I HISTOCOMPATIBILITY ANTIGEN, C ALPHA CHAIN"/>
    <property type="match status" value="1"/>
</dbReference>
<dbReference type="PANTHER" id="PTHR16675">
    <property type="entry name" value="MHC CLASS I-RELATED"/>
    <property type="match status" value="1"/>
</dbReference>
<dbReference type="Pfam" id="PF07654">
    <property type="entry name" value="C1-set"/>
    <property type="match status" value="1"/>
</dbReference>
<dbReference type="Pfam" id="PF00129">
    <property type="entry name" value="MHC_I"/>
    <property type="match status" value="1"/>
</dbReference>
<dbReference type="PRINTS" id="PR01638">
    <property type="entry name" value="MHCCLASSI"/>
</dbReference>
<dbReference type="SMART" id="SM00407">
    <property type="entry name" value="IGc1"/>
    <property type="match status" value="1"/>
</dbReference>
<dbReference type="SUPFAM" id="SSF48726">
    <property type="entry name" value="Immunoglobulin"/>
    <property type="match status" value="1"/>
</dbReference>
<dbReference type="SUPFAM" id="SSF54452">
    <property type="entry name" value="MHC antigen-recognition domain"/>
    <property type="match status" value="1"/>
</dbReference>
<dbReference type="PROSITE" id="PS50835">
    <property type="entry name" value="IG_LIKE"/>
    <property type="match status" value="1"/>
</dbReference>
<dbReference type="PROSITE" id="PS00290">
    <property type="entry name" value="IG_MHC"/>
    <property type="match status" value="1"/>
</dbReference>
<reference key="1">
    <citation type="journal article" date="1990" name="Proc. Natl. Acad. Sci. U.S.A.">
        <title>Concerted evolution of class I genes in the major histocompatibility complex of murine rodents.</title>
        <authorList>
            <person name="Rada C."/>
            <person name="Lorenzi R."/>
            <person name="Powis S.J."/>
            <person name="van den Bogaerde J."/>
            <person name="Parham P."/>
            <person name="Howard J.C."/>
        </authorList>
    </citation>
    <scope>NUCLEOTIDE SEQUENCE [MRNA]</scope>
</reference>
<reference key="2">
    <citation type="journal article" date="1987" name="J. Exp. Med.">
        <title>Identification in rat liver and serum of water-soluble class I MHC molecules possibly homologous to the murine Q10 gene product.</title>
        <authorList>
            <person name="Spencer S.C."/>
            <person name="Fabre J.W."/>
        </authorList>
    </citation>
    <scope>PROTEIN SEQUENCE OF 25-49</scope>
</reference>
<accession>P15978</accession>
<sequence>MGAMAPRTLLLLLAAVLAPTQTWAGSHSLRYFHTAVSRPGLGEPRFISVGYVDDTQFVRYDSDAENPRYEPRARWMEREGPEYWEEQTLVAKGQELDYRVSLRNLLSYYNQSEGGSHTIQRMYGCDVGSDGSLLRGYEQHAYDGRDYIALNEDLKTWAVADFAAWITRSKWQRNGAAERSRAYLEGTCVEWLLRYLERGKETLLRSDPPEAHVTLHPRPEGDVTLRCWALGFYPADITLTWQLNGEDLTQDMELVETRPAGDGTFQKWASVVVPLGKEQNYTCRVEHEGLPEPLSQRWEPSPSTDSNLLLLFLELWQFL</sequence>
<protein>
    <recommendedName>
        <fullName>Class I histocompatibility antigen, Non-RT1.A alpha-1 chain</fullName>
    </recommendedName>
</protein>
<organism>
    <name type="scientific">Rattus norvegicus</name>
    <name type="common">Rat</name>
    <dbReference type="NCBI Taxonomy" id="10116"/>
    <lineage>
        <taxon>Eukaryota</taxon>
        <taxon>Metazoa</taxon>
        <taxon>Chordata</taxon>
        <taxon>Craniata</taxon>
        <taxon>Vertebrata</taxon>
        <taxon>Euteleostomi</taxon>
        <taxon>Mammalia</taxon>
        <taxon>Eutheria</taxon>
        <taxon>Euarchontoglires</taxon>
        <taxon>Glires</taxon>
        <taxon>Rodentia</taxon>
        <taxon>Myomorpha</taxon>
        <taxon>Muroidea</taxon>
        <taxon>Muridae</taxon>
        <taxon>Murinae</taxon>
        <taxon>Rattus</taxon>
    </lineage>
</organism>
<evidence type="ECO:0000250" key="1"/>
<evidence type="ECO:0000255" key="2"/>
<evidence type="ECO:0000255" key="3">
    <source>
        <dbReference type="PROSITE-ProRule" id="PRU00114"/>
    </source>
</evidence>
<evidence type="ECO:0000305" key="4"/>
<comment type="function">
    <text>Involved in the presentation of foreign antigens to the immune system.</text>
</comment>
<comment type="subunit">
    <text>Heterodimer of an alpha chain and a beta chain (beta-2-microglobulin).</text>
</comment>
<comment type="subcellular location">
    <subcellularLocation>
        <location>Membrane</location>
        <topology>Single-pass type I membrane protein</topology>
    </subcellularLocation>
</comment>
<comment type="similarity">
    <text evidence="4">Belongs to the MHC class I family.</text>
</comment>